<feature type="chain" id="PRO_0000236045" description="Integrator complex subunit 1">
    <location>
        <begin position="1"/>
        <end position="2195"/>
    </location>
</feature>
<feature type="transmembrane region" description="Helical" evidence="2">
    <location>
        <begin position="1165"/>
        <end position="1185"/>
    </location>
</feature>
<feature type="region of interest" description="Disordered" evidence="3">
    <location>
        <begin position="1"/>
        <end position="86"/>
    </location>
</feature>
<feature type="region of interest" description="Disordered" evidence="3">
    <location>
        <begin position="267"/>
        <end position="297"/>
    </location>
</feature>
<feature type="region of interest" description="Disordered" evidence="3">
    <location>
        <begin position="923"/>
        <end position="947"/>
    </location>
</feature>
<feature type="region of interest" description="Disordered" evidence="3">
    <location>
        <begin position="1313"/>
        <end position="1347"/>
    </location>
</feature>
<feature type="compositionally biased region" description="Polar residues" evidence="3">
    <location>
        <begin position="34"/>
        <end position="45"/>
    </location>
</feature>
<feature type="compositionally biased region" description="Low complexity" evidence="3">
    <location>
        <begin position="62"/>
        <end position="75"/>
    </location>
</feature>
<feature type="compositionally biased region" description="Basic and acidic residues" evidence="3">
    <location>
        <begin position="1316"/>
        <end position="1325"/>
    </location>
</feature>
<feature type="modified residue" description="Phosphoserine" evidence="1">
    <location>
        <position position="13"/>
    </location>
</feature>
<feature type="modified residue" description="N6-acetyllysine" evidence="1">
    <location>
        <position position="47"/>
    </location>
</feature>
<feature type="modified residue" description="Phosphothreonine" evidence="1">
    <location>
        <position position="83"/>
    </location>
</feature>
<feature type="modified residue" description="Phosphoserine" evidence="1">
    <location>
        <position position="87"/>
    </location>
</feature>
<feature type="modified residue" description="Phosphoserine" evidence="1">
    <location>
        <position position="307"/>
    </location>
</feature>
<feature type="modified residue" description="Phosphoserine" evidence="1">
    <location>
        <position position="926"/>
    </location>
</feature>
<feature type="modified residue" description="Phosphoserine" evidence="9">
    <location>
        <position position="1320"/>
    </location>
</feature>
<feature type="modified residue" description="Phosphoserine" evidence="9">
    <location>
        <position position="1328"/>
    </location>
</feature>
<feature type="modified residue" description="Phosphoserine" evidence="9">
    <location>
        <position position="1329"/>
    </location>
</feature>
<feature type="sequence conflict" description="In Ref. 1; BAF03197 and 2; AAH10333." evidence="7" ref="1 2">
    <original>C</original>
    <variation>R</variation>
    <location>
        <position position="1680"/>
    </location>
</feature>
<proteinExistence type="evidence at protein level"/>
<accession>Q6P4S8</accession>
<accession>Q0KK58</accession>
<accession>Q80UQ7</accession>
<accession>Q91Z01</accession>
<accession>Q9CTF7</accession>
<reference key="1">
    <citation type="submission" date="2006-08" db="EMBL/GenBank/DDBJ databases">
        <authorList>
            <consortium name="The German cDNA consortium"/>
        </authorList>
    </citation>
    <scope>NUCLEOTIDE SEQUENCE [LARGE SCALE MRNA]</scope>
    <source>
        <strain>BALB/cJ</strain>
        <tissue>Brain</tissue>
    </source>
</reference>
<reference key="2">
    <citation type="journal article" date="2004" name="Genome Res.">
        <title>The status, quality, and expansion of the NIH full-length cDNA project: the Mammalian Gene Collection (MGC).</title>
        <authorList>
            <consortium name="The MGC Project Team"/>
        </authorList>
    </citation>
    <scope>NUCLEOTIDE SEQUENCE [LARGE SCALE MRNA]</scope>
    <source>
        <strain>C57BL/6J</strain>
        <tissue>Brain</tissue>
        <tissue>Mammary gland</tissue>
    </source>
</reference>
<reference key="3">
    <citation type="journal article" date="2005" name="Science">
        <title>The transcriptional landscape of the mammalian genome.</title>
        <authorList>
            <person name="Carninci P."/>
            <person name="Kasukawa T."/>
            <person name="Katayama S."/>
            <person name="Gough J."/>
            <person name="Frith M.C."/>
            <person name="Maeda N."/>
            <person name="Oyama R."/>
            <person name="Ravasi T."/>
            <person name="Lenhard B."/>
            <person name="Wells C."/>
            <person name="Kodzius R."/>
            <person name="Shimokawa K."/>
            <person name="Bajic V.B."/>
            <person name="Brenner S.E."/>
            <person name="Batalov S."/>
            <person name="Forrest A.R."/>
            <person name="Zavolan M."/>
            <person name="Davis M.J."/>
            <person name="Wilming L.G."/>
            <person name="Aidinis V."/>
            <person name="Allen J.E."/>
            <person name="Ambesi-Impiombato A."/>
            <person name="Apweiler R."/>
            <person name="Aturaliya R.N."/>
            <person name="Bailey T.L."/>
            <person name="Bansal M."/>
            <person name="Baxter L."/>
            <person name="Beisel K.W."/>
            <person name="Bersano T."/>
            <person name="Bono H."/>
            <person name="Chalk A.M."/>
            <person name="Chiu K.P."/>
            <person name="Choudhary V."/>
            <person name="Christoffels A."/>
            <person name="Clutterbuck D.R."/>
            <person name="Crowe M.L."/>
            <person name="Dalla E."/>
            <person name="Dalrymple B.P."/>
            <person name="de Bono B."/>
            <person name="Della Gatta G."/>
            <person name="di Bernardo D."/>
            <person name="Down T."/>
            <person name="Engstrom P."/>
            <person name="Fagiolini M."/>
            <person name="Faulkner G."/>
            <person name="Fletcher C.F."/>
            <person name="Fukushima T."/>
            <person name="Furuno M."/>
            <person name="Futaki S."/>
            <person name="Gariboldi M."/>
            <person name="Georgii-Hemming P."/>
            <person name="Gingeras T.R."/>
            <person name="Gojobori T."/>
            <person name="Green R.E."/>
            <person name="Gustincich S."/>
            <person name="Harbers M."/>
            <person name="Hayashi Y."/>
            <person name="Hensch T.K."/>
            <person name="Hirokawa N."/>
            <person name="Hill D."/>
            <person name="Huminiecki L."/>
            <person name="Iacono M."/>
            <person name="Ikeo K."/>
            <person name="Iwama A."/>
            <person name="Ishikawa T."/>
            <person name="Jakt M."/>
            <person name="Kanapin A."/>
            <person name="Katoh M."/>
            <person name="Kawasawa Y."/>
            <person name="Kelso J."/>
            <person name="Kitamura H."/>
            <person name="Kitano H."/>
            <person name="Kollias G."/>
            <person name="Krishnan S.P."/>
            <person name="Kruger A."/>
            <person name="Kummerfeld S.K."/>
            <person name="Kurochkin I.V."/>
            <person name="Lareau L.F."/>
            <person name="Lazarevic D."/>
            <person name="Lipovich L."/>
            <person name="Liu J."/>
            <person name="Liuni S."/>
            <person name="McWilliam S."/>
            <person name="Madan Babu M."/>
            <person name="Madera M."/>
            <person name="Marchionni L."/>
            <person name="Matsuda H."/>
            <person name="Matsuzawa S."/>
            <person name="Miki H."/>
            <person name="Mignone F."/>
            <person name="Miyake S."/>
            <person name="Morris K."/>
            <person name="Mottagui-Tabar S."/>
            <person name="Mulder N."/>
            <person name="Nakano N."/>
            <person name="Nakauchi H."/>
            <person name="Ng P."/>
            <person name="Nilsson R."/>
            <person name="Nishiguchi S."/>
            <person name="Nishikawa S."/>
            <person name="Nori F."/>
            <person name="Ohara O."/>
            <person name="Okazaki Y."/>
            <person name="Orlando V."/>
            <person name="Pang K.C."/>
            <person name="Pavan W.J."/>
            <person name="Pavesi G."/>
            <person name="Pesole G."/>
            <person name="Petrovsky N."/>
            <person name="Piazza S."/>
            <person name="Reed J."/>
            <person name="Reid J.F."/>
            <person name="Ring B.Z."/>
            <person name="Ringwald M."/>
            <person name="Rost B."/>
            <person name="Ruan Y."/>
            <person name="Salzberg S.L."/>
            <person name="Sandelin A."/>
            <person name="Schneider C."/>
            <person name="Schoenbach C."/>
            <person name="Sekiguchi K."/>
            <person name="Semple C.A."/>
            <person name="Seno S."/>
            <person name="Sessa L."/>
            <person name="Sheng Y."/>
            <person name="Shibata Y."/>
            <person name="Shimada H."/>
            <person name="Shimada K."/>
            <person name="Silva D."/>
            <person name="Sinclair B."/>
            <person name="Sperling S."/>
            <person name="Stupka E."/>
            <person name="Sugiura K."/>
            <person name="Sultana R."/>
            <person name="Takenaka Y."/>
            <person name="Taki K."/>
            <person name="Tammoja K."/>
            <person name="Tan S.L."/>
            <person name="Tang S."/>
            <person name="Taylor M.S."/>
            <person name="Tegner J."/>
            <person name="Teichmann S.A."/>
            <person name="Ueda H.R."/>
            <person name="van Nimwegen E."/>
            <person name="Verardo R."/>
            <person name="Wei C.L."/>
            <person name="Yagi K."/>
            <person name="Yamanishi H."/>
            <person name="Zabarovsky E."/>
            <person name="Zhu S."/>
            <person name="Zimmer A."/>
            <person name="Hide W."/>
            <person name="Bult C."/>
            <person name="Grimmond S.M."/>
            <person name="Teasdale R.D."/>
            <person name="Liu E.T."/>
            <person name="Brusic V."/>
            <person name="Quackenbush J."/>
            <person name="Wahlestedt C."/>
            <person name="Mattick J.S."/>
            <person name="Hume D.A."/>
            <person name="Kai C."/>
            <person name="Sasaki D."/>
            <person name="Tomaru Y."/>
            <person name="Fukuda S."/>
            <person name="Kanamori-Katayama M."/>
            <person name="Suzuki M."/>
            <person name="Aoki J."/>
            <person name="Arakawa T."/>
            <person name="Iida J."/>
            <person name="Imamura K."/>
            <person name="Itoh M."/>
            <person name="Kato T."/>
            <person name="Kawaji H."/>
            <person name="Kawagashira N."/>
            <person name="Kawashima T."/>
            <person name="Kojima M."/>
            <person name="Kondo S."/>
            <person name="Konno H."/>
            <person name="Nakano K."/>
            <person name="Ninomiya N."/>
            <person name="Nishio T."/>
            <person name="Okada M."/>
            <person name="Plessy C."/>
            <person name="Shibata K."/>
            <person name="Shiraki T."/>
            <person name="Suzuki S."/>
            <person name="Tagami M."/>
            <person name="Waki K."/>
            <person name="Watahiki A."/>
            <person name="Okamura-Oho Y."/>
            <person name="Suzuki H."/>
            <person name="Kawai J."/>
            <person name="Hayashizaki Y."/>
        </authorList>
    </citation>
    <scope>NUCLEOTIDE SEQUENCE [LARGE SCALE MRNA] OF 2034-2195</scope>
    <source>
        <strain>C57BL/6J</strain>
    </source>
</reference>
<reference key="4">
    <citation type="journal article" date="2007" name="Biochim. Biophys. Acta">
        <title>Targeted disruption of the murine large nuclear KIAA1440/Ints1 protein causes growth arrest in early blastocyst stage embryos and eventual apoptotic cell death.</title>
        <authorList>
            <person name="Hata T."/>
            <person name="Nakayama M."/>
        </authorList>
    </citation>
    <scope>FUNCTION</scope>
    <scope>SUBCELLULAR LOCATION</scope>
    <scope>DISRUPTION PHENOTYPE</scope>
</reference>
<reference key="5">
    <citation type="journal article" date="2010" name="Cell">
        <title>A tissue-specific atlas of mouse protein phosphorylation and expression.</title>
        <authorList>
            <person name="Huttlin E.L."/>
            <person name="Jedrychowski M.P."/>
            <person name="Elias J.E."/>
            <person name="Goswami T."/>
            <person name="Rad R."/>
            <person name="Beausoleil S.A."/>
            <person name="Villen J."/>
            <person name="Haas W."/>
            <person name="Sowa M.E."/>
            <person name="Gygi S.P."/>
        </authorList>
    </citation>
    <scope>PHOSPHORYLATION [LARGE SCALE ANALYSIS] AT SER-1320; SER-1328 AND SER-1329</scope>
    <scope>IDENTIFICATION BY MASS SPECTROMETRY [LARGE SCALE ANALYSIS]</scope>
    <source>
        <tissue>Brain</tissue>
        <tissue>Kidney</tissue>
        <tissue>Liver</tissue>
        <tissue>Pancreas</tissue>
        <tissue>Spleen</tissue>
        <tissue>Testis</tissue>
    </source>
</reference>
<reference key="6">
    <citation type="journal article" date="2015" name="Nat. Commun.">
        <title>Fgf and Esrrb integrate epigenetic and transcriptional networks that regulate self-renewal of trophoblast stem cells.</title>
        <authorList>
            <person name="Latos P.A."/>
            <person name="Goncalves A."/>
            <person name="Oxley D."/>
            <person name="Mohammed H."/>
            <person name="Turro E."/>
            <person name="Hemberger M."/>
        </authorList>
    </citation>
    <scope>INTERACTION WITH ESRRB</scope>
</reference>
<comment type="function">
    <text evidence="1">Component of the integrator complex, a multiprotein complex that terminates RNA polymerase II (Pol II) transcription in the promoter-proximal region of genes. The integrator complex provides a quality checkpoint during transcription elongation by driving premature transcription termination of transcripts that are unfavorably configured for transcriptional elongation: the complex terminates transcription by (1) catalyzing dephosphorylation of the C-terminal domain (CTD) of Pol II subunit POLR2A/RPB1 and SUPT5H/SPT5, (2) degrading the exiting nascent RNA transcript via endonuclease activity and (3) promoting the release of Pol II from bound DNA. The integrator complex is also involved in terminating the synthesis of non-coding Pol II transcripts, such as enhancer RNAs (eRNAs), small nuclear RNAs (snRNAs), telomerase RNAs and long non-coding RNAs (lncRNAs). Within the integrator complex, INTS1 is involved in the post-termination step: INTS1 displaces INTS3 and the SOSS factors, allowing the integrator complex to return to the closed conformation, ready to bind to the paused elongation complex for another termination cycle. Mediates recruitment of cytoplasmic dynein to the nuclear envelope, probably as component of the integrator complex.</text>
</comment>
<comment type="subunit">
    <text evidence="1 5">Component of the Integrator complex, composed of core subunits INTS1, INTS2, INTS3, INTS4, INTS5, INTS6, INTS7, INTS8, INTS9/RC74, INTS10, INTS11/CPSF3L, INTS12, INTS13, INTS14 and INTS15 (By similarity). The core complex associates with protein phosphatase 2A subunits PPP2CA and PPP2R1A, to form the Integrator-PP2A (INTAC) complex (By similarity). Interacts with ESRRB, ESRRB is not a core component of the Integrator complex and this association is a bridge for the interaction with the multiprotein complex Integrator; attracts the transcriptional machinery (PubMed:26206133).</text>
</comment>
<comment type="subcellular location">
    <subcellularLocation>
        <location evidence="4">Nucleus</location>
    </subcellularLocation>
    <subcellularLocation>
        <location evidence="1">Nucleus membrane</location>
        <topology evidence="2">Single-pass membrane protein</topology>
    </subcellularLocation>
</comment>
<comment type="disruption phenotype">
    <text evidence="4">Embryonic lethality: embryos arrest at early blastocyst stage.</text>
</comment>
<comment type="similarity">
    <text evidence="7">Belongs to the Integrator subunit 1 family.</text>
</comment>
<comment type="sequence caution" evidence="7">
    <conflict type="miscellaneous discrepancy">
        <sequence resource="EMBL-CDS" id="AAH63266"/>
    </conflict>
    <text>Could be due to alternative splicing but with non canonical splice junction.</text>
</comment>
<comment type="sequence caution" evidence="7">
    <conflict type="erroneous initiation">
        <sequence resource="EMBL-CDS" id="BAF03197"/>
    </conflict>
    <text>Extended N-terminus.</text>
</comment>
<keyword id="KW-0007">Acetylation</keyword>
<keyword id="KW-0472">Membrane</keyword>
<keyword id="KW-0539">Nucleus</keyword>
<keyword id="KW-0597">Phosphoprotein</keyword>
<keyword id="KW-1185">Reference proteome</keyword>
<keyword id="KW-0812">Transmembrane</keyword>
<keyword id="KW-1133">Transmembrane helix</keyword>
<gene>
    <name evidence="6 8" type="primary">Ints1</name>
</gene>
<evidence type="ECO:0000250" key="1">
    <source>
        <dbReference type="UniProtKB" id="Q8N201"/>
    </source>
</evidence>
<evidence type="ECO:0000255" key="2"/>
<evidence type="ECO:0000256" key="3">
    <source>
        <dbReference type="SAM" id="MobiDB-lite"/>
    </source>
</evidence>
<evidence type="ECO:0000269" key="4">
    <source>
    </source>
</evidence>
<evidence type="ECO:0000269" key="5">
    <source>
    </source>
</evidence>
<evidence type="ECO:0000303" key="6">
    <source>
    </source>
</evidence>
<evidence type="ECO:0000305" key="7"/>
<evidence type="ECO:0000312" key="8">
    <source>
        <dbReference type="MGI" id="MGI:1915760"/>
    </source>
</evidence>
<evidence type="ECO:0007744" key="9">
    <source>
    </source>
</evidence>
<organism>
    <name type="scientific">Mus musculus</name>
    <name type="common">Mouse</name>
    <dbReference type="NCBI Taxonomy" id="10090"/>
    <lineage>
        <taxon>Eukaryota</taxon>
        <taxon>Metazoa</taxon>
        <taxon>Chordata</taxon>
        <taxon>Craniata</taxon>
        <taxon>Vertebrata</taxon>
        <taxon>Euteleostomi</taxon>
        <taxon>Mammalia</taxon>
        <taxon>Eutheria</taxon>
        <taxon>Euarchontoglires</taxon>
        <taxon>Glires</taxon>
        <taxon>Rodentia</taxon>
        <taxon>Myomorpha</taxon>
        <taxon>Muroidea</taxon>
        <taxon>Muridae</taxon>
        <taxon>Murinae</taxon>
        <taxon>Mus</taxon>
        <taxon>Mus</taxon>
    </lineage>
</organism>
<dbReference type="EMBL" id="AB257854">
    <property type="protein sequence ID" value="BAF03197.1"/>
    <property type="status" value="ALT_INIT"/>
    <property type="molecule type" value="mRNA"/>
</dbReference>
<dbReference type="EMBL" id="BC010333">
    <property type="protein sequence ID" value="AAH10333.1"/>
    <property type="molecule type" value="mRNA"/>
</dbReference>
<dbReference type="EMBL" id="BC063266">
    <property type="protein sequence ID" value="AAH63266.1"/>
    <property type="status" value="ALT_SEQ"/>
    <property type="molecule type" value="mRNA"/>
</dbReference>
<dbReference type="EMBL" id="AK003728">
    <property type="protein sequence ID" value="BAB22963.1"/>
    <property type="molecule type" value="mRNA"/>
</dbReference>
<dbReference type="CCDS" id="CCDS57399.1"/>
<dbReference type="RefSeq" id="NP_081024.4">
    <property type="nucleotide sequence ID" value="NM_026748.3"/>
</dbReference>
<dbReference type="SMR" id="Q6P4S8"/>
<dbReference type="BioGRID" id="212895">
    <property type="interactions" value="17"/>
</dbReference>
<dbReference type="DIP" id="DIP-59891N"/>
<dbReference type="FunCoup" id="Q6P4S8">
    <property type="interactions" value="3021"/>
</dbReference>
<dbReference type="IntAct" id="Q6P4S8">
    <property type="interactions" value="2"/>
</dbReference>
<dbReference type="MINT" id="Q6P4S8"/>
<dbReference type="STRING" id="10090.ENSMUSP00000143789"/>
<dbReference type="GlyGen" id="Q6P4S8">
    <property type="glycosylation" value="4 sites, 2 N-linked glycans (2 sites), 1 O-linked glycan (2 sites)"/>
</dbReference>
<dbReference type="iPTMnet" id="Q6P4S8"/>
<dbReference type="PhosphoSitePlus" id="Q6P4S8"/>
<dbReference type="jPOST" id="Q6P4S8"/>
<dbReference type="PaxDb" id="10090-ENSMUSP00000072406"/>
<dbReference type="ProteomicsDB" id="269489"/>
<dbReference type="Pumba" id="Q6P4S8"/>
<dbReference type="DNASU" id="68510"/>
<dbReference type="Ensembl" id="ENSMUST00000200393.5">
    <property type="protein sequence ID" value="ENSMUSP00000143789.3"/>
    <property type="gene ID" value="ENSMUSG00000029547.11"/>
</dbReference>
<dbReference type="GeneID" id="68510"/>
<dbReference type="KEGG" id="mmu:68510"/>
<dbReference type="AGR" id="MGI:1915760"/>
<dbReference type="CTD" id="26173"/>
<dbReference type="MGI" id="MGI:1915760">
    <property type="gene designation" value="Ints1"/>
</dbReference>
<dbReference type="eggNOG" id="KOG4596">
    <property type="taxonomic scope" value="Eukaryota"/>
</dbReference>
<dbReference type="GeneTree" id="ENSGT00390000015743"/>
<dbReference type="InParanoid" id="Q6P4S8"/>
<dbReference type="OrthoDB" id="19938at2759"/>
<dbReference type="PhylomeDB" id="Q6P4S8"/>
<dbReference type="Reactome" id="R-MMU-6807505">
    <property type="pathway name" value="RNA polymerase II transcribes snRNA genes"/>
</dbReference>
<dbReference type="BioGRID-ORCS" id="68510">
    <property type="hits" value="20 hits in 79 CRISPR screens"/>
</dbReference>
<dbReference type="ChiTaRS" id="Ints1">
    <property type="organism name" value="mouse"/>
</dbReference>
<dbReference type="PRO" id="PR:Q6P4S8"/>
<dbReference type="Proteomes" id="UP000000589">
    <property type="component" value="Chromosome 5"/>
</dbReference>
<dbReference type="RNAct" id="Q6P4S8">
    <property type="molecule type" value="protein"/>
</dbReference>
<dbReference type="GO" id="GO:0160232">
    <property type="term" value="C:INTAC complex"/>
    <property type="evidence" value="ECO:0000250"/>
    <property type="project" value="UniProtKB"/>
</dbReference>
<dbReference type="GO" id="GO:0032039">
    <property type="term" value="C:integrator complex"/>
    <property type="evidence" value="ECO:0000250"/>
    <property type="project" value="UniProtKB"/>
</dbReference>
<dbReference type="GO" id="GO:0031965">
    <property type="term" value="C:nuclear membrane"/>
    <property type="evidence" value="ECO:0007669"/>
    <property type="project" value="UniProtKB-SubCell"/>
</dbReference>
<dbReference type="GO" id="GO:0005634">
    <property type="term" value="C:nucleus"/>
    <property type="evidence" value="ECO:0000314"/>
    <property type="project" value="MGI"/>
</dbReference>
<dbReference type="GO" id="GO:0001832">
    <property type="term" value="P:blastocyst growth"/>
    <property type="evidence" value="ECO:0000315"/>
    <property type="project" value="MGI"/>
</dbReference>
<dbReference type="GO" id="GO:0007566">
    <property type="term" value="P:embryo implantation"/>
    <property type="evidence" value="ECO:0000315"/>
    <property type="project" value="MGI"/>
</dbReference>
<dbReference type="GO" id="GO:0001833">
    <property type="term" value="P:inner cell mass cell proliferation"/>
    <property type="evidence" value="ECO:0000315"/>
    <property type="project" value="MGI"/>
</dbReference>
<dbReference type="GO" id="GO:0043066">
    <property type="term" value="P:negative regulation of apoptotic process"/>
    <property type="evidence" value="ECO:0000315"/>
    <property type="project" value="MGI"/>
</dbReference>
<dbReference type="GO" id="GO:0160240">
    <property type="term" value="P:RNA polymerase II transcription initiation surveillance"/>
    <property type="evidence" value="ECO:0000250"/>
    <property type="project" value="UniProtKB"/>
</dbReference>
<dbReference type="GO" id="GO:0034474">
    <property type="term" value="P:U2 snRNA 3'-end processing"/>
    <property type="evidence" value="ECO:0000315"/>
    <property type="project" value="MGI"/>
</dbReference>
<dbReference type="InterPro" id="IPR016024">
    <property type="entry name" value="ARM-type_fold"/>
</dbReference>
<dbReference type="InterPro" id="IPR053964">
    <property type="entry name" value="INT1_R3"/>
</dbReference>
<dbReference type="InterPro" id="IPR038902">
    <property type="entry name" value="INTS1"/>
</dbReference>
<dbReference type="InterPro" id="IPR053966">
    <property type="entry name" value="INTS1_INTS2-bd"/>
</dbReference>
<dbReference type="InterPro" id="IPR053965">
    <property type="entry name" value="INTS1_R4"/>
</dbReference>
<dbReference type="InterPro" id="IPR022145">
    <property type="entry name" value="INTS1_RPB2-bd"/>
</dbReference>
<dbReference type="PANTHER" id="PTHR21224">
    <property type="entry name" value="INTEGRATOR COMPLEX SUBUNIT 1"/>
    <property type="match status" value="1"/>
</dbReference>
<dbReference type="PANTHER" id="PTHR21224:SF1">
    <property type="entry name" value="INTEGRATOR COMPLEX SUBUNIT 1"/>
    <property type="match status" value="1"/>
</dbReference>
<dbReference type="Pfam" id="PF22927">
    <property type="entry name" value="INT1_R3"/>
    <property type="match status" value="1"/>
</dbReference>
<dbReference type="Pfam" id="PF22929">
    <property type="entry name" value="INTS1_INTS2-bd"/>
    <property type="match status" value="1"/>
</dbReference>
<dbReference type="Pfam" id="PF22928">
    <property type="entry name" value="INTS1_R4"/>
    <property type="match status" value="1"/>
</dbReference>
<dbReference type="Pfam" id="PF12432">
    <property type="entry name" value="INTS1_RP2B-bd"/>
    <property type="match status" value="1"/>
</dbReference>
<dbReference type="SUPFAM" id="SSF48371">
    <property type="entry name" value="ARM repeat"/>
    <property type="match status" value="1"/>
</dbReference>
<protein>
    <recommendedName>
        <fullName evidence="7">Integrator complex subunit 1</fullName>
        <shortName>Int1</shortName>
    </recommendedName>
</protein>
<sequence>MNRAKPTTVRRPSAAAKPSGHPPPGDFIALGSKGQASESKTTSTLLKPAPSGLPSERKRDASASLSGTSALTGLTKRPKLSSTPPLSALGRLAEAAVAEKRAISPSIKEPSVVPIEVLPTVLLDEIEAAELEGNDDRIEGVLCGAVKQLKVTRAKPDSTLYLSLMYLAKIKPNIFATEGVIEALCSLLRRDASVNFKAKGNSLVSVLACNLLMAAYEEDENWPEIFVKVYIEDSLGERIWVDSPHCRTFVDNIQTAFNTKMPPKSVLLQGEGARSGGELGAGSSPHPSLTEEEDSQTELLIAEEKLSPEQEGQLMPRPRYDELTESVEEYVLDMLRDQLNRRQPIDNVSRNLLRLLTATCGYKEVRLLAVQRLEMWLQNPKLTRPAQDLLMSVCMNCNSHGSEDMDVISHLIKIRLKPKVLLNHYMLCIRELLNAHKDNLGTTIKFVIFNELSNARNPNNMQILYTVLQHSSELAPKFLAMVFQDLLTNKDDYLRASRALLREIIKQTKHEINFQAFCLGLMQERKEPQYLEMEFKERFVVHITDVLAVSMMLGITAQVKEAGVAWDKGEKRNLEVLRTFQNQIAAIQRDAVWWLHTVVPSVSKLAPKDYVHCLHKVLFTEQPETYYKWDNWPPESDRNFFLRLCSEVPILEDTLMRVLVIGLSRELPLGPADAMELADHLVKRAAAVQADDVEVLKVERIQLIDAVLNLCTYHHPENIQLPPGYQPPNLAISTLYWKAWPLLLVVAAFNPENIGLAAWEEYPTLKMLMEMVMTNNYSYPPCTLTDEETRTEMINRELQISQREKQEILAFEGHLAAASTKQTITESSSLLLSQLTSLDPQGPPRRPPPHILDQVKALNQSLRLGHLLCRSRNPDFLLHIIQRQASSQSMPWLADLVQSSEGSLDVLPVQCLCEFLLHDAADSTASGEEDDEGESREQKAKKRQRQQKQRQLLGRLQDLLLGPKADEQTTCEVLDYFLRRLGSSQVASRVLAMKGLSLVLSEGGLRDKEEKEPPMEEDIGETDALQGYQWLLRDLPRLPLFDSVRTTTALALQQAIHMETDPQTISAYLIYLSQHTPVEEQGPHSDLALDVARLVVERSTIMAHLFSKPSCSTASDAVLSALLSVFSRYVRRMRKSKEGEEVYSWSESQDQVFLRWSSGETATMHILVVHAMVILLTLGPPRSGDSEFSELLDIWFPEKKPLPTAFLVDTSEEALLLPDWLKLRMIRSEVPRLVDAALQDLEPQQLLLFVQSFGIPVSSMSKLLQYLDQAVAQDPQTLEQNIMDKNYMAHLVEVQHERGASGGQTFHSLLTASLPPRRDSTEAPKPESSPEPPPGQGRTRAGTQVPVLGPEDDLAGIFLQIFPLSPDPRWQSSSPRPLALALQQALGQELARVRQGNPEVPGITVRLLQAMTTLLSSPHGGTLALAMHHSHFLSCPLMRQLYQYQRAVPQDTGFSSLFLKVLMQILQWLDSPAVEDGPLQAQLKLFATRYSARHRISDVRSGLLHLADALSFHGDLEVANSTARAVIATLRSGEKCPVEPELISKVLRGLIEVRSPHLEELLTALFSATTETSCPSPASGPIVVVSSLLLQEKEELLGPSKQEVEGASTEAMRLGPASGLLVDWLETLDPEVVCSCPDLQWKLLFSRRKGKGHISAQVLSFRPYLLALLTHQASWSTLHCCIRVLLGKSREQRLDPSASLDFLWACIHVPRIWQGRDQRTPQKRREELVLHVQGPELLSLVELILSEAETRSQDGDSAARTLIQTRLPLLLSCCRSNDESIGKVTEHLTSCIQQWGDSVLGQRCRDLLLQLYLQRPEVRVPVPEVLLQSEGATSSSICKLDGLVHRFITLLADTSDSRSSESRVADANMACRKLAVAHPVLLLRHLPMIAALLHGRTHLNFQEFRQQNHLAFFLHVLGILELLQPRVFQSEHQGALWDCLRSFIRLLLNYRKSSRHLAPFISKFVQFIHKYVGCSAPAAVAFLQKHAEPLHDLSFDNSDLVMLKSLLAGLSLPSRDGRTDQGLDEEGEDERSAGSLPLVSVSLSTPLTVADVAPHMKRLSRGRAVEDVLETLSDIDEMSRRRPEVLGFFSTNLQRLMSSAEESCRNLAFSLALRSIQNNPSIAADFLPTFMYCLGSRDFEVVQTALRNLPEYTLLCQEHAAVLLHRAFLVGVYGQIDTSAQISEALKILHMEAVM</sequence>
<name>INT1_MOUSE</name>